<comment type="function">
    <text evidence="1">Catalyzes the ATP-dependent conversion of 7-carboxy-7-deazaguanine (CDG) to 7-cyano-7-deazaguanine (preQ(0)).</text>
</comment>
<comment type="catalytic activity">
    <reaction evidence="1">
        <text>7-carboxy-7-deazaguanine + NH4(+) + ATP = 7-cyano-7-deazaguanine + ADP + phosphate + H2O + H(+)</text>
        <dbReference type="Rhea" id="RHEA:27982"/>
        <dbReference type="ChEBI" id="CHEBI:15377"/>
        <dbReference type="ChEBI" id="CHEBI:15378"/>
        <dbReference type="ChEBI" id="CHEBI:28938"/>
        <dbReference type="ChEBI" id="CHEBI:30616"/>
        <dbReference type="ChEBI" id="CHEBI:43474"/>
        <dbReference type="ChEBI" id="CHEBI:45075"/>
        <dbReference type="ChEBI" id="CHEBI:61036"/>
        <dbReference type="ChEBI" id="CHEBI:456216"/>
        <dbReference type="EC" id="6.3.4.20"/>
    </reaction>
</comment>
<comment type="cofactor">
    <cofactor evidence="1">
        <name>Zn(2+)</name>
        <dbReference type="ChEBI" id="CHEBI:29105"/>
    </cofactor>
    <text evidence="1">Binds 1 zinc ion per subunit.</text>
</comment>
<comment type="pathway">
    <text evidence="1">Purine metabolism; 7-cyano-7-deazaguanine biosynthesis.</text>
</comment>
<comment type="similarity">
    <text evidence="1">Belongs to the QueC family.</text>
</comment>
<sequence>MKRAVVVFSGGQDSTTCLVQALQQYDEVHCVTFDYGQRHRAEIDVARELALKLGARAHKVLDVTLLNELAVSSLTRDSIPVPDYEPEADGIPNTFVPGRNILFLTLAAIYAYQVKAEAVITGVCETDFSGYPDCRDEFVKALNHAVSLGMAKDIRFETPLMWIDKAETWALADYYGKLDLVRNETLTCYNGIKGDGCGHCAACNLRANGLNHYLADKPTVMAAMKQKTGLR</sequence>
<gene>
    <name evidence="1" type="primary">queC</name>
    <name type="ordered locus">SbBS512_E0367</name>
</gene>
<feature type="chain" id="PRO_1000186638" description="7-cyano-7-deazaguanine synthase">
    <location>
        <begin position="1"/>
        <end position="231"/>
    </location>
</feature>
<feature type="binding site" evidence="1">
    <location>
        <begin position="8"/>
        <end position="18"/>
    </location>
    <ligand>
        <name>ATP</name>
        <dbReference type="ChEBI" id="CHEBI:30616"/>
    </ligand>
</feature>
<feature type="binding site" evidence="1">
    <location>
        <position position="188"/>
    </location>
    <ligand>
        <name>Zn(2+)</name>
        <dbReference type="ChEBI" id="CHEBI:29105"/>
    </ligand>
</feature>
<feature type="binding site" evidence="1">
    <location>
        <position position="197"/>
    </location>
    <ligand>
        <name>Zn(2+)</name>
        <dbReference type="ChEBI" id="CHEBI:29105"/>
    </ligand>
</feature>
<feature type="binding site" evidence="1">
    <location>
        <position position="200"/>
    </location>
    <ligand>
        <name>Zn(2+)</name>
        <dbReference type="ChEBI" id="CHEBI:29105"/>
    </ligand>
</feature>
<feature type="binding site" evidence="1">
    <location>
        <position position="203"/>
    </location>
    <ligand>
        <name>Zn(2+)</name>
        <dbReference type="ChEBI" id="CHEBI:29105"/>
    </ligand>
</feature>
<keyword id="KW-0067">ATP-binding</keyword>
<keyword id="KW-0436">Ligase</keyword>
<keyword id="KW-0479">Metal-binding</keyword>
<keyword id="KW-0547">Nucleotide-binding</keyword>
<keyword id="KW-0671">Queuosine biosynthesis</keyword>
<keyword id="KW-1185">Reference proteome</keyword>
<keyword id="KW-0862">Zinc</keyword>
<accession>B2U4P9</accession>
<protein>
    <recommendedName>
        <fullName evidence="1">7-cyano-7-deazaguanine synthase</fullName>
        <ecNumber evidence="1">6.3.4.20</ecNumber>
    </recommendedName>
    <alternativeName>
        <fullName evidence="1">7-cyano-7-carbaguanine synthase</fullName>
    </alternativeName>
    <alternativeName>
        <fullName evidence="1">PreQ(0) synthase</fullName>
    </alternativeName>
    <alternativeName>
        <fullName evidence="1">Queuosine biosynthesis protein QueC</fullName>
    </alternativeName>
</protein>
<proteinExistence type="inferred from homology"/>
<dbReference type="EC" id="6.3.4.20" evidence="1"/>
<dbReference type="EMBL" id="CP001063">
    <property type="protein sequence ID" value="ACD06516.1"/>
    <property type="molecule type" value="Genomic_DNA"/>
</dbReference>
<dbReference type="RefSeq" id="WP_000817229.1">
    <property type="nucleotide sequence ID" value="NC_010658.1"/>
</dbReference>
<dbReference type="SMR" id="B2U4P9"/>
<dbReference type="STRING" id="344609.SbBS512_E0367"/>
<dbReference type="GeneID" id="93777006"/>
<dbReference type="KEGG" id="sbc:SbBS512_E0367"/>
<dbReference type="HOGENOM" id="CLU_081854_0_0_6"/>
<dbReference type="UniPathway" id="UPA00391"/>
<dbReference type="Proteomes" id="UP000001030">
    <property type="component" value="Chromosome"/>
</dbReference>
<dbReference type="GO" id="GO:0005524">
    <property type="term" value="F:ATP binding"/>
    <property type="evidence" value="ECO:0007669"/>
    <property type="project" value="UniProtKB-UniRule"/>
</dbReference>
<dbReference type="GO" id="GO:0016879">
    <property type="term" value="F:ligase activity, forming carbon-nitrogen bonds"/>
    <property type="evidence" value="ECO:0007669"/>
    <property type="project" value="UniProtKB-UniRule"/>
</dbReference>
<dbReference type="GO" id="GO:0008270">
    <property type="term" value="F:zinc ion binding"/>
    <property type="evidence" value="ECO:0007669"/>
    <property type="project" value="UniProtKB-UniRule"/>
</dbReference>
<dbReference type="GO" id="GO:0008616">
    <property type="term" value="P:queuosine biosynthetic process"/>
    <property type="evidence" value="ECO:0007669"/>
    <property type="project" value="UniProtKB-UniRule"/>
</dbReference>
<dbReference type="CDD" id="cd01995">
    <property type="entry name" value="QueC-like"/>
    <property type="match status" value="1"/>
</dbReference>
<dbReference type="FunFam" id="3.40.50.620:FF:000017">
    <property type="entry name" value="7-cyano-7-deazaguanine synthase"/>
    <property type="match status" value="1"/>
</dbReference>
<dbReference type="Gene3D" id="3.40.50.620">
    <property type="entry name" value="HUPs"/>
    <property type="match status" value="1"/>
</dbReference>
<dbReference type="HAMAP" id="MF_01633">
    <property type="entry name" value="QueC"/>
    <property type="match status" value="1"/>
</dbReference>
<dbReference type="InterPro" id="IPR018317">
    <property type="entry name" value="QueC"/>
</dbReference>
<dbReference type="InterPro" id="IPR014729">
    <property type="entry name" value="Rossmann-like_a/b/a_fold"/>
</dbReference>
<dbReference type="NCBIfam" id="TIGR00364">
    <property type="entry name" value="7-cyano-7-deazaguanine synthase QueC"/>
    <property type="match status" value="1"/>
</dbReference>
<dbReference type="NCBIfam" id="NF008317">
    <property type="entry name" value="PRK11106.1"/>
    <property type="match status" value="1"/>
</dbReference>
<dbReference type="PANTHER" id="PTHR42914">
    <property type="entry name" value="7-CYANO-7-DEAZAGUANINE SYNTHASE"/>
    <property type="match status" value="1"/>
</dbReference>
<dbReference type="PANTHER" id="PTHR42914:SF1">
    <property type="entry name" value="7-CYANO-7-DEAZAGUANINE SYNTHASE"/>
    <property type="match status" value="1"/>
</dbReference>
<dbReference type="Pfam" id="PF06508">
    <property type="entry name" value="QueC"/>
    <property type="match status" value="1"/>
</dbReference>
<dbReference type="PIRSF" id="PIRSF006293">
    <property type="entry name" value="ExsB"/>
    <property type="match status" value="1"/>
</dbReference>
<dbReference type="SUPFAM" id="SSF52402">
    <property type="entry name" value="Adenine nucleotide alpha hydrolases-like"/>
    <property type="match status" value="1"/>
</dbReference>
<reference key="1">
    <citation type="submission" date="2008-05" db="EMBL/GenBank/DDBJ databases">
        <title>Complete sequence of Shigella boydii serotype 18 strain BS512.</title>
        <authorList>
            <person name="Rasko D.A."/>
            <person name="Rosovitz M."/>
            <person name="Maurelli A.T."/>
            <person name="Myers G."/>
            <person name="Seshadri R."/>
            <person name="Cer R."/>
            <person name="Jiang L."/>
            <person name="Ravel J."/>
            <person name="Sebastian Y."/>
        </authorList>
    </citation>
    <scope>NUCLEOTIDE SEQUENCE [LARGE SCALE GENOMIC DNA]</scope>
    <source>
        <strain>CDC 3083-94 / BS512</strain>
    </source>
</reference>
<name>QUEC_SHIB3</name>
<evidence type="ECO:0000255" key="1">
    <source>
        <dbReference type="HAMAP-Rule" id="MF_01633"/>
    </source>
</evidence>
<organism>
    <name type="scientific">Shigella boydii serotype 18 (strain CDC 3083-94 / BS512)</name>
    <dbReference type="NCBI Taxonomy" id="344609"/>
    <lineage>
        <taxon>Bacteria</taxon>
        <taxon>Pseudomonadati</taxon>
        <taxon>Pseudomonadota</taxon>
        <taxon>Gammaproteobacteria</taxon>
        <taxon>Enterobacterales</taxon>
        <taxon>Enterobacteriaceae</taxon>
        <taxon>Shigella</taxon>
    </lineage>
</organism>